<name>ATG2_EREGS</name>
<dbReference type="EMBL" id="AE016815">
    <property type="protein sequence ID" value="AAS50563.2"/>
    <property type="status" value="ALT_INIT"/>
    <property type="molecule type" value="Genomic_DNA"/>
</dbReference>
<dbReference type="RefSeq" id="NP_982739.2">
    <property type="nucleotide sequence ID" value="NM_208092.2"/>
</dbReference>
<dbReference type="FunCoup" id="Q75E74">
    <property type="interactions" value="53"/>
</dbReference>
<dbReference type="STRING" id="284811.Q75E74"/>
<dbReference type="GeneID" id="4618818"/>
<dbReference type="KEGG" id="ago:AGOS_ABL208W"/>
<dbReference type="eggNOG" id="KOG2993">
    <property type="taxonomic scope" value="Eukaryota"/>
</dbReference>
<dbReference type="InParanoid" id="Q75E74"/>
<dbReference type="OrthoDB" id="18982at2759"/>
<dbReference type="Proteomes" id="UP000000591">
    <property type="component" value="Chromosome II"/>
</dbReference>
<dbReference type="GO" id="GO:0005789">
    <property type="term" value="C:endoplasmic reticulum membrane"/>
    <property type="evidence" value="ECO:0007669"/>
    <property type="project" value="UniProtKB-SubCell"/>
</dbReference>
<dbReference type="GO" id="GO:0061908">
    <property type="term" value="C:phagophore"/>
    <property type="evidence" value="ECO:0000318"/>
    <property type="project" value="GO_Central"/>
</dbReference>
<dbReference type="GO" id="GO:0000407">
    <property type="term" value="C:phagophore assembly site"/>
    <property type="evidence" value="ECO:0000318"/>
    <property type="project" value="GO_Central"/>
</dbReference>
<dbReference type="GO" id="GO:0034045">
    <property type="term" value="C:phagophore assembly site membrane"/>
    <property type="evidence" value="ECO:0007669"/>
    <property type="project" value="UniProtKB-SubCell"/>
</dbReference>
<dbReference type="GO" id="GO:0032266">
    <property type="term" value="F:phosphatidylinositol-3-phosphate binding"/>
    <property type="evidence" value="ECO:0000318"/>
    <property type="project" value="GO_Central"/>
</dbReference>
<dbReference type="GO" id="GO:0043495">
    <property type="term" value="F:protein-membrane adaptor activity"/>
    <property type="evidence" value="ECO:0000318"/>
    <property type="project" value="GO_Central"/>
</dbReference>
<dbReference type="GO" id="GO:0000045">
    <property type="term" value="P:autophagosome assembly"/>
    <property type="evidence" value="ECO:0000318"/>
    <property type="project" value="GO_Central"/>
</dbReference>
<dbReference type="GO" id="GO:0000422">
    <property type="term" value="P:autophagy of mitochondrion"/>
    <property type="evidence" value="ECO:0000318"/>
    <property type="project" value="GO_Central"/>
</dbReference>
<dbReference type="GO" id="GO:0061723">
    <property type="term" value="P:glycophagy"/>
    <property type="evidence" value="ECO:0000318"/>
    <property type="project" value="GO_Central"/>
</dbReference>
<dbReference type="GO" id="GO:0006869">
    <property type="term" value="P:lipid transport"/>
    <property type="evidence" value="ECO:0007669"/>
    <property type="project" value="UniProtKB-KW"/>
</dbReference>
<dbReference type="GO" id="GO:0000425">
    <property type="term" value="P:pexophagy"/>
    <property type="evidence" value="ECO:0000318"/>
    <property type="project" value="GO_Central"/>
</dbReference>
<dbReference type="GO" id="GO:0034727">
    <property type="term" value="P:piecemeal microautophagy of the nucleus"/>
    <property type="evidence" value="ECO:0000318"/>
    <property type="project" value="GO_Central"/>
</dbReference>
<dbReference type="GO" id="GO:0015031">
    <property type="term" value="P:protein transport"/>
    <property type="evidence" value="ECO:0007669"/>
    <property type="project" value="UniProtKB-KW"/>
</dbReference>
<dbReference type="GO" id="GO:0061709">
    <property type="term" value="P:reticulophagy"/>
    <property type="evidence" value="ECO:0000318"/>
    <property type="project" value="GO_Central"/>
</dbReference>
<dbReference type="InterPro" id="IPR026849">
    <property type="entry name" value="ATG2"/>
</dbReference>
<dbReference type="PANTHER" id="PTHR13190">
    <property type="entry name" value="AUTOPHAGY-RELATED 2, ISOFORM A"/>
    <property type="match status" value="1"/>
</dbReference>
<dbReference type="PANTHER" id="PTHR13190:SF1">
    <property type="entry name" value="AUTOPHAGY-RELATED 2, ISOFORM A"/>
    <property type="match status" value="1"/>
</dbReference>
<dbReference type="Pfam" id="PF13329">
    <property type="entry name" value="ATG2_CAD"/>
    <property type="match status" value="1"/>
</dbReference>
<feature type="chain" id="PRO_0000215825" description="Autophagy-related protein 2">
    <location>
        <begin position="1"/>
        <end position="1525"/>
    </location>
</feature>
<evidence type="ECO:0000250" key="1">
    <source>
        <dbReference type="UniProtKB" id="O94649"/>
    </source>
</evidence>
<evidence type="ECO:0000250" key="2">
    <source>
        <dbReference type="UniProtKB" id="P53855"/>
    </source>
</evidence>
<evidence type="ECO:0000305" key="3"/>
<gene>
    <name type="primary">ATG2</name>
    <name type="ordered locus">ABL208W</name>
</gene>
<reference key="1">
    <citation type="journal article" date="2004" name="Science">
        <title>The Ashbya gossypii genome as a tool for mapping the ancient Saccharomyces cerevisiae genome.</title>
        <authorList>
            <person name="Dietrich F.S."/>
            <person name="Voegeli S."/>
            <person name="Brachat S."/>
            <person name="Lerch A."/>
            <person name="Gates K."/>
            <person name="Steiner S."/>
            <person name="Mohr C."/>
            <person name="Poehlmann R."/>
            <person name="Luedi P."/>
            <person name="Choi S."/>
            <person name="Wing R.A."/>
            <person name="Flavier A."/>
            <person name="Gaffney T.D."/>
            <person name="Philippsen P."/>
        </authorList>
    </citation>
    <scope>NUCLEOTIDE SEQUENCE [LARGE SCALE GENOMIC DNA]</scope>
    <source>
        <strain>ATCC 10895 / CBS 109.51 / FGSC 9923 / NRRL Y-1056</strain>
    </source>
</reference>
<reference key="2">
    <citation type="journal article" date="2013" name="G3 (Bethesda)">
        <title>Genomes of Ashbya fungi isolated from insects reveal four mating-type loci, numerous translocations, lack of transposons, and distinct gene duplications.</title>
        <authorList>
            <person name="Dietrich F.S."/>
            <person name="Voegeli S."/>
            <person name="Kuo S."/>
            <person name="Philippsen P."/>
        </authorList>
    </citation>
    <scope>GENOME REANNOTATION</scope>
    <scope>SEQUENCE REVISION TO 792</scope>
    <source>
        <strain>ATCC 10895 / CBS 109.51 / FGSC 9923 / NRRL Y-1056</strain>
    </source>
</reference>
<keyword id="KW-0072">Autophagy</keyword>
<keyword id="KW-0256">Endoplasmic reticulum</keyword>
<keyword id="KW-0445">Lipid transport</keyword>
<keyword id="KW-0472">Membrane</keyword>
<keyword id="KW-0653">Protein transport</keyword>
<keyword id="KW-1185">Reference proteome</keyword>
<keyword id="KW-0813">Transport</keyword>
<organism>
    <name type="scientific">Eremothecium gossypii (strain ATCC 10895 / CBS 109.51 / FGSC 9923 / NRRL Y-1056)</name>
    <name type="common">Yeast</name>
    <name type="synonym">Ashbya gossypii</name>
    <dbReference type="NCBI Taxonomy" id="284811"/>
    <lineage>
        <taxon>Eukaryota</taxon>
        <taxon>Fungi</taxon>
        <taxon>Dikarya</taxon>
        <taxon>Ascomycota</taxon>
        <taxon>Saccharomycotina</taxon>
        <taxon>Saccharomycetes</taxon>
        <taxon>Saccharomycetales</taxon>
        <taxon>Saccharomycetaceae</taxon>
        <taxon>Eremothecium</taxon>
    </lineage>
</organism>
<protein>
    <recommendedName>
        <fullName>Autophagy-related protein 2</fullName>
    </recommendedName>
</protein>
<accession>Q75E74</accession>
<sequence>MSSWLPQNVQKRLLIYLLQQISIFSQIDTTNLDVSLGCRSQFAFHDVELNVDHMRVPHITVESGHISELELGLVVSGGLDITGDGLCFVVRPELSEVAGSHDLAQSLARSIMDLTNSMMQPLPEVLEGDEVLANSCSEAGDAQQPASSSALDKMRNKVLERALSNLTVRIINVRIQVLFPGQQSITVLVGSVELSTVDKTRRVDLQDICISHSELVPSPEQPDEFMSTSASNSIYMSAIDSLPFGSRSKMEENARNVRALLQMDKLHVTFQGISSVEDISIRDLMLHMGRVDVFLDAIIAVDIGVFEVLVQFVAEFQQDTEVSETSNTLQNYKRFRQEQNLEEDLQITGFTIEELRITLSQSVKVSVIDIQLRNRYIENSTVTVGRVTICDYDLDLLHIDAGSKPCLELTVDSRKLQRIISVDGDIHMDISSTFVSSLIPLIFRLQELGRGLHFVGTNNCKMSQEFKTQVETKTIILSLPVGDDTLQMIIQPISYELSLHTVFTDFISISKVQSSETRDIAIIREIKIGYQTANFQVKSYNLKLSETLLTSKLRGSVSSVELYCSDSDIKWLFDGLSPYQDMITPYMHSKPEVRKPIMNKSVRILSASSVIHRQNVFSDMVLLIERITCSLSADSISSFGNVKTELNSSLLSLNTDNSIIFHSSCVKGSTVFSDVKYCLFEPIKTKDVTKPALFVQRFENGKLKVNVQNTCIYYHAKWLDILDESKGTKSTPQQESAVPVPLQQRIEVKFHDCALSMHPYRLKSALLICVNRCILDISVPPANFKCIIRSPTFMLADDCSNMKTSITESWESLVRYYSKAGFAVIGKSGLLSCTIKQSGGQICLDIDVDRIDLSICADSFQCLIQTLIDIKPPVSFPDEKKYRTEPCSIPVFENVDDEFFVPKGTSNLPALNDMHIVDDFINNSNNSFSEVQVIEETEEGSPLKLEDNGLLFDEGHFNKEDIPVATDSKFFPFGPVAIVLHLFVRKASIKLHDGYDWVYTRRSISKVVDDLEDEVHKQDQPGRVETSLFDSIYLYATPDSNIKKAVSSNIQSEDIIAENYSSKMKLRPSKHHKILIELTNMKLTFSGYSYDEPTEDIADWSTDLLNSIDVEVKTFEIVDNVATSTWNKFLTELKEAHGGSPSMLALSISLVRPIDFLYATELIISAQVSPLRLHVDQDTLDFLIRFSEFKDARFDLIDDYPDIVYIQRFEVNSIDVKLDYKPKKVDYVGLKSGHTSELMNFFTLDGAKMTLKRVVLYGVDGLGELHNCLSSIWTPDITRSQLSGVLKGVTPLKSIITLGSGVKALVTVPLKEYRQDQRLTRSLQKGARDFLKTTSGELIRLGVRMASGTQAILENTEEFFGGQGARARCMSARLPEDELSPVPSACDEFDLFRSSIPRKQSPIVPIPSEEDDIEPLKAISLYADQPQNAQKGVKEAYGSLGKNLTIAYGAVRRAQRDARHSISAQDAATAFARATPIAFIRPMIGATEAVSKTLQGISNQMDRDQLVHMRDKYKQSSHYQRKRER</sequence>
<proteinExistence type="inferred from homology"/>
<comment type="function">
    <text evidence="2">Lipid transfer protein required for autophagosome completion and peroxisome degradation. Tethers the edge of the isolation membrane (IM) to the endoplasmic reticulum (ER) and mediates direct lipid transfer from ER to IM for IM expansion. ATG2 binds to the ER exit site (ERES), which is the membrane source for autophagosome formation, using basic residues in its N-terminal region (NR) and to the expanding edge of the IM through its C-terminal region. The latter binding is assisted by an ATG18-PtdIns3P interaction. ATG2 then extracts phospholipids from the membrane source using its NR and transfers them to ATG9 to the IM through its predicted beta-sheet-rich structure for membrane expansion.</text>
</comment>
<comment type="catalytic activity">
    <reaction evidence="1">
        <text>a 1,2-diacyl-sn-glycero-3-phosphocholine(in) = a 1,2-diacyl-sn-glycero-3-phosphocholine(out)</text>
        <dbReference type="Rhea" id="RHEA:38571"/>
        <dbReference type="ChEBI" id="CHEBI:57643"/>
    </reaction>
</comment>
<comment type="catalytic activity">
    <reaction evidence="1">
        <text>a 1,2-diacyl-sn-glycero-3-phospho-L-serine(in) = a 1,2-diacyl-sn-glycero-3-phospho-L-serine(out)</text>
        <dbReference type="Rhea" id="RHEA:38663"/>
        <dbReference type="ChEBI" id="CHEBI:57262"/>
    </reaction>
</comment>
<comment type="catalytic activity">
    <reaction evidence="1">
        <text>a 1,2-diacyl-sn-glycero-3-phosphoethanolamine(in) = a 1,2-diacyl-sn-glycero-3-phosphoethanolamine(out)</text>
        <dbReference type="Rhea" id="RHEA:38895"/>
        <dbReference type="ChEBI" id="CHEBI:64612"/>
    </reaction>
</comment>
<comment type="subcellular location">
    <subcellularLocation>
        <location evidence="2">Preautophagosomal structure membrane</location>
        <topology evidence="2">Peripheral membrane protein</topology>
    </subcellularLocation>
    <subcellularLocation>
        <location evidence="2">Endoplasmic reticulum membrane</location>
        <topology evidence="2">Peripheral membrane protein</topology>
    </subcellularLocation>
</comment>
<comment type="similarity">
    <text evidence="3">Belongs to the ATG2 family.</text>
</comment>
<comment type="sequence caution" evidence="3">
    <conflict type="erroneous initiation">
        <sequence resource="EMBL-CDS" id="AAS50563"/>
    </conflict>
    <text>Extended N-terminus.</text>
</comment>